<evidence type="ECO:0000255" key="1">
    <source>
        <dbReference type="HAMAP-Rule" id="MF_01527"/>
    </source>
</evidence>
<name>MPTA_METLZ</name>
<sequence length="311" mass="34821">MSLPDVQSTAPDVRISLTRVGVKNVRKLVEVGRPGKTRPAIFISEFDVFVDLPSSLKGANLSRNFEVIDEVLQQATSGDVKGIEDVCGIVSRKLLDHHEYADRTEVFMRSFYMMNRETPVSKTSCQEVINVYAHAVAQRTNGKPMVRKSVGAEVTGITACPCAQNIMKDHAMHVMEQLEIPEDKISAFFNEIPMASHNQRGRGFLCVETDGDIIVPLEKIVTVLKESMSAKIYELLKRGDESYVVMAAHKNARFVEDCVREMARRVVSTFGDLPGDTHITIRQTNEESIHQHDAYAERKATLAELRDELSI</sequence>
<protein>
    <recommendedName>
        <fullName evidence="1">GTP cyclohydrolase MptA</fullName>
        <ecNumber evidence="1">3.5.4.39</ecNumber>
    </recommendedName>
    <alternativeName>
        <fullName evidence="1">GTP cyclohydrolase IV</fullName>
    </alternativeName>
</protein>
<feature type="chain" id="PRO_0000289536" description="GTP cyclohydrolase MptA">
    <location>
        <begin position="1"/>
        <end position="311"/>
    </location>
</feature>
<feature type="site" description="May be catalytically important" evidence="1">
    <location>
        <position position="160"/>
    </location>
</feature>
<dbReference type="EC" id="3.5.4.39" evidence="1"/>
<dbReference type="EMBL" id="CP000559">
    <property type="protein sequence ID" value="ABN06196.1"/>
    <property type="molecule type" value="Genomic_DNA"/>
</dbReference>
<dbReference type="RefSeq" id="WP_011832397.1">
    <property type="nucleotide sequence ID" value="NC_008942.1"/>
</dbReference>
<dbReference type="SMR" id="A2SPE0"/>
<dbReference type="STRING" id="410358.Mlab_0018"/>
<dbReference type="GeneID" id="4794768"/>
<dbReference type="KEGG" id="mla:Mlab_0018"/>
<dbReference type="eggNOG" id="arCOG04301">
    <property type="taxonomic scope" value="Archaea"/>
</dbReference>
<dbReference type="HOGENOM" id="CLU_062816_1_0_2"/>
<dbReference type="OrthoDB" id="53087at2157"/>
<dbReference type="UniPathway" id="UPA00065"/>
<dbReference type="Proteomes" id="UP000000365">
    <property type="component" value="Chromosome"/>
</dbReference>
<dbReference type="GO" id="GO:0003934">
    <property type="term" value="F:GTP cyclohydrolase I activity"/>
    <property type="evidence" value="ECO:0007669"/>
    <property type="project" value="InterPro"/>
</dbReference>
<dbReference type="GO" id="GO:0044682">
    <property type="term" value="F:GTP cyclohydrolase IV activity"/>
    <property type="evidence" value="ECO:0007669"/>
    <property type="project" value="UniProtKB-UniRule"/>
</dbReference>
<dbReference type="GO" id="GO:0005506">
    <property type="term" value="F:iron ion binding"/>
    <property type="evidence" value="ECO:0007669"/>
    <property type="project" value="UniProtKB-UniRule"/>
</dbReference>
<dbReference type="GO" id="GO:2001118">
    <property type="term" value="P:tetrahydromethanopterin biosynthetic process"/>
    <property type="evidence" value="ECO:0007669"/>
    <property type="project" value="UniProtKB-UniRule"/>
</dbReference>
<dbReference type="Gene3D" id="3.10.270.10">
    <property type="entry name" value="Urate Oxidase"/>
    <property type="match status" value="1"/>
</dbReference>
<dbReference type="HAMAP" id="MF_01527_A">
    <property type="entry name" value="GTP_cyclohydrol_A"/>
    <property type="match status" value="1"/>
</dbReference>
<dbReference type="InterPro" id="IPR003801">
    <property type="entry name" value="GTP_cyclohydrolase_FolE2/MptA"/>
</dbReference>
<dbReference type="InterPro" id="IPR022840">
    <property type="entry name" value="GTP_cyclohydrolase_MptA"/>
</dbReference>
<dbReference type="NCBIfam" id="TIGR00294">
    <property type="entry name" value="GTP cyclohydrolase MptA"/>
    <property type="match status" value="1"/>
</dbReference>
<dbReference type="PANTHER" id="PTHR36445">
    <property type="entry name" value="GTP CYCLOHYDROLASE MPTA"/>
    <property type="match status" value="1"/>
</dbReference>
<dbReference type="PANTHER" id="PTHR36445:SF1">
    <property type="entry name" value="GTP CYCLOHYDROLASE MPTA"/>
    <property type="match status" value="1"/>
</dbReference>
<dbReference type="Pfam" id="PF02649">
    <property type="entry name" value="GCHY-1"/>
    <property type="match status" value="1"/>
</dbReference>
<accession>A2SPE0</accession>
<keyword id="KW-0378">Hydrolase</keyword>
<keyword id="KW-0408">Iron</keyword>
<keyword id="KW-0479">Metal-binding</keyword>
<keyword id="KW-1185">Reference proteome</keyword>
<organism>
    <name type="scientific">Methanocorpusculum labreanum (strain ATCC 43576 / DSM 4855 / Z)</name>
    <dbReference type="NCBI Taxonomy" id="410358"/>
    <lineage>
        <taxon>Archaea</taxon>
        <taxon>Methanobacteriati</taxon>
        <taxon>Methanobacteriota</taxon>
        <taxon>Stenosarchaea group</taxon>
        <taxon>Methanomicrobia</taxon>
        <taxon>Methanomicrobiales</taxon>
        <taxon>Methanocorpusculaceae</taxon>
        <taxon>Methanocorpusculum</taxon>
    </lineage>
</organism>
<comment type="function">
    <text evidence="1">Converts GTP to 7,8-dihydro-D-neopterin 2',3'-cyclic phosphate, the first intermediate in the biosynthesis of coenzyme methanopterin.</text>
</comment>
<comment type="catalytic activity">
    <reaction evidence="1">
        <text>GTP + H2O = 7,8-dihydroneopterin 2',3'-cyclic phosphate + formate + diphosphate + H(+)</text>
        <dbReference type="Rhea" id="RHEA:25860"/>
        <dbReference type="ChEBI" id="CHEBI:15377"/>
        <dbReference type="ChEBI" id="CHEBI:15378"/>
        <dbReference type="ChEBI" id="CHEBI:15740"/>
        <dbReference type="ChEBI" id="CHEBI:33019"/>
        <dbReference type="ChEBI" id="CHEBI:37565"/>
        <dbReference type="ChEBI" id="CHEBI:58854"/>
        <dbReference type="EC" id="3.5.4.39"/>
    </reaction>
</comment>
<comment type="cofactor">
    <cofactor evidence="1">
        <name>Fe(2+)</name>
        <dbReference type="ChEBI" id="CHEBI:29033"/>
    </cofactor>
    <text evidence="1">Binds 1 Fe(2+) ion per subunit.</text>
</comment>
<comment type="pathway">
    <text evidence="1">Cofactor biosynthesis; 5,6,7,8-tetrahydromethanopterin biosynthesis.</text>
</comment>
<comment type="subunit">
    <text evidence="1">Homodimer.</text>
</comment>
<comment type="similarity">
    <text evidence="1">Belongs to the GTP cyclohydrolase IV family.</text>
</comment>
<proteinExistence type="inferred from homology"/>
<reference key="1">
    <citation type="journal article" date="2009" name="Stand. Genomic Sci.">
        <title>Complete genome sequence of Methanocorpusculum labreanum type strain Z.</title>
        <authorList>
            <person name="Anderson I.J."/>
            <person name="Sieprawska-Lupa M."/>
            <person name="Goltsman E."/>
            <person name="Lapidus A."/>
            <person name="Copeland A."/>
            <person name="Glavina Del Rio T."/>
            <person name="Tice H."/>
            <person name="Dalin E."/>
            <person name="Barry K."/>
            <person name="Pitluck S."/>
            <person name="Hauser L."/>
            <person name="Land M."/>
            <person name="Lucas S."/>
            <person name="Richardson P."/>
            <person name="Whitman W.B."/>
            <person name="Kyrpides N.C."/>
        </authorList>
    </citation>
    <scope>NUCLEOTIDE SEQUENCE [LARGE SCALE GENOMIC DNA]</scope>
    <source>
        <strain>ATCC 43576 / DSM 4855 / Z</strain>
    </source>
</reference>
<gene>
    <name evidence="1" type="primary">mptA</name>
    <name type="ordered locus">Mlab_0018</name>
</gene>